<keyword id="KW-0472">Membrane</keyword>
<keyword id="KW-0496">Mitochondrion</keyword>
<keyword id="KW-0999">Mitochondrion inner membrane</keyword>
<keyword id="KW-1278">Translocase</keyword>
<keyword id="KW-0812">Transmembrane</keyword>
<keyword id="KW-1133">Transmembrane helix</keyword>
<organism>
    <name type="scientific">Hippopotamus amphibius</name>
    <name type="common">Hippopotamus</name>
    <dbReference type="NCBI Taxonomy" id="9833"/>
    <lineage>
        <taxon>Eukaryota</taxon>
        <taxon>Metazoa</taxon>
        <taxon>Chordata</taxon>
        <taxon>Craniata</taxon>
        <taxon>Vertebrata</taxon>
        <taxon>Euteleostomi</taxon>
        <taxon>Mammalia</taxon>
        <taxon>Eutheria</taxon>
        <taxon>Laurasiatheria</taxon>
        <taxon>Artiodactyla</taxon>
        <taxon>Whippomorpha</taxon>
        <taxon>Ancodonta</taxon>
        <taxon>Hippopotamidae</taxon>
        <taxon>Hippopotamus</taxon>
    </lineage>
</organism>
<name>COX3_HIPAM</name>
<reference key="1">
    <citation type="journal article" date="1998" name="Proc. R. Soc. B">
        <title>Analyses of mitochondrial genomes strongly support a hippopotamus-whale clade.</title>
        <authorList>
            <person name="Ursing B.M."/>
            <person name="Arnason U."/>
        </authorList>
    </citation>
    <scope>NUCLEOTIDE SEQUENCE [GENOMIC DNA]</scope>
</reference>
<sequence>MTHQTHAYHMVNPSPWPLTGALSALLMSSGLTMWFHFNSLILLTTGLVTNILTMYQWWRDVIRESTFQGHHTPVVQKGLRYGMVLFIISEVLFFTGFFWAFYHSSLAPTPELGGCWPPTGINPLNPLEVPLLNTSVLLASGVSITWAHHSLMEGNRKQMLQALFITIALGVYFTLLQASEYHEASFTISDGVYGSTFFVATGFHGLHVIIGSTFLIVCFLRQLKFHFTSDHHFGFEAAAWYWHFVDVVWLFLYVSIYWWGS</sequence>
<geneLocation type="mitochondrion"/>
<proteinExistence type="inferred from homology"/>
<gene>
    <name type="primary">MT-CO3</name>
    <name type="synonym">COIII</name>
    <name type="synonym">COXIII</name>
    <name type="synonym">MTCO3</name>
</gene>
<evidence type="ECO:0000250" key="1">
    <source>
        <dbReference type="UniProtKB" id="P00415"/>
    </source>
</evidence>
<evidence type="ECO:0000250" key="2">
    <source>
        <dbReference type="UniProtKB" id="P00420"/>
    </source>
</evidence>
<evidence type="ECO:0000305" key="3"/>
<accession>Q9ZZY5</accession>
<comment type="function">
    <text evidence="2">Component of the cytochrome c oxidase, the last enzyme in the mitochondrial electron transport chain which drives oxidative phosphorylation. The respiratory chain contains 3 multisubunit complexes succinate dehydrogenase (complex II, CII), ubiquinol-cytochrome c oxidoreductase (cytochrome b-c1 complex, complex III, CIII) and cytochrome c oxidase (complex IV, CIV), that cooperate to transfer electrons derived from NADH and succinate to molecular oxygen, creating an electrochemical gradient over the inner membrane that drives transmembrane transport and the ATP synthase. Cytochrome c oxidase is the component of the respiratory chain that catalyzes the reduction of oxygen to water. Electrons originating from reduced cytochrome c in the intermembrane space (IMS) are transferred via the dinuclear copper A center (CU(A)) of subunit 2 and heme A of subunit 1 to the active site in subunit 1, a binuclear center (BNC) formed by heme A3 and copper B (CU(B)). The BNC reduces molecular oxygen to 2 water molecules using 4 electrons from cytochrome c in the IMS and 4 protons from the mitochondrial matrix.</text>
</comment>
<comment type="catalytic activity">
    <reaction evidence="2">
        <text>4 Fe(II)-[cytochrome c] + O2 + 8 H(+)(in) = 4 Fe(III)-[cytochrome c] + 2 H2O + 4 H(+)(out)</text>
        <dbReference type="Rhea" id="RHEA:11436"/>
        <dbReference type="Rhea" id="RHEA-COMP:10350"/>
        <dbReference type="Rhea" id="RHEA-COMP:14399"/>
        <dbReference type="ChEBI" id="CHEBI:15377"/>
        <dbReference type="ChEBI" id="CHEBI:15378"/>
        <dbReference type="ChEBI" id="CHEBI:15379"/>
        <dbReference type="ChEBI" id="CHEBI:29033"/>
        <dbReference type="ChEBI" id="CHEBI:29034"/>
        <dbReference type="EC" id="7.1.1.9"/>
    </reaction>
    <physiologicalReaction direction="left-to-right" evidence="2">
        <dbReference type="Rhea" id="RHEA:11437"/>
    </physiologicalReaction>
</comment>
<comment type="subunit">
    <text evidence="1">Component of the cytochrome c oxidase (complex IV, CIV), a multisubunit enzyme composed of 14 subunits. The complex is composed of a catalytic core of 3 subunits MT-CO1, MT-CO2 and MT-CO3, encoded in the mitochondrial DNA, and 11 supernumerary subunits COX4I, COX5A, COX5B, COX6A, COX6B, COX6C, COX7A, COX7B, COX7C, COX8 and NDUFA4, which are encoded in the nuclear genome. The complex exists as a monomer or a dimer and forms supercomplexes (SCs) in the inner mitochondrial membrane with NADH-ubiquinone oxidoreductase (complex I, CI) and ubiquinol-cytochrome c oxidoreductase (cytochrome b-c1 complex, complex III, CIII), resulting in different assemblies (supercomplex SCI(1)III(2)IV(1) and megacomplex MCI(2)III(2)IV(2)).</text>
</comment>
<comment type="subcellular location">
    <subcellularLocation>
        <location evidence="1">Mitochondrion inner membrane</location>
        <topology evidence="1">Multi-pass membrane protein</topology>
    </subcellularLocation>
</comment>
<comment type="similarity">
    <text evidence="3">Belongs to the cytochrome c oxidase subunit 3 family.</text>
</comment>
<feature type="chain" id="PRO_0000183791" description="Cytochrome c oxidase subunit 3">
    <location>
        <begin position="1"/>
        <end position="261"/>
    </location>
</feature>
<feature type="topological domain" description="Mitochondrial matrix" evidence="1">
    <location>
        <begin position="1"/>
        <end position="15"/>
    </location>
</feature>
<feature type="transmembrane region" description="Helical; Name=I" evidence="1">
    <location>
        <begin position="16"/>
        <end position="34"/>
    </location>
</feature>
<feature type="topological domain" description="Mitochondrial intermembrane" evidence="1">
    <location>
        <begin position="35"/>
        <end position="40"/>
    </location>
</feature>
<feature type="transmembrane region" description="Helical; Name=II" evidence="1">
    <location>
        <begin position="41"/>
        <end position="66"/>
    </location>
</feature>
<feature type="topological domain" description="Mitochondrial matrix" evidence="1">
    <location>
        <begin position="67"/>
        <end position="72"/>
    </location>
</feature>
<feature type="transmembrane region" description="Helical; Name=III" evidence="1">
    <location>
        <begin position="73"/>
        <end position="105"/>
    </location>
</feature>
<feature type="topological domain" description="Mitochondrial intermembrane" evidence="1">
    <location>
        <begin position="106"/>
        <end position="128"/>
    </location>
</feature>
<feature type="transmembrane region" description="Helical; Name=IV" evidence="1">
    <location>
        <begin position="129"/>
        <end position="152"/>
    </location>
</feature>
<feature type="topological domain" description="Mitochondrial matrix" evidence="1">
    <location>
        <begin position="153"/>
        <end position="155"/>
    </location>
</feature>
<feature type="transmembrane region" description="Helical; Name=V" evidence="1">
    <location>
        <begin position="156"/>
        <end position="183"/>
    </location>
</feature>
<feature type="topological domain" description="Mitochondrial intermembrane" evidence="1">
    <location>
        <begin position="184"/>
        <end position="190"/>
    </location>
</feature>
<feature type="transmembrane region" description="Helical; Name=VI" evidence="1">
    <location>
        <begin position="191"/>
        <end position="223"/>
    </location>
</feature>
<feature type="topological domain" description="Mitochondrial matrix" evidence="1">
    <location>
        <begin position="224"/>
        <end position="232"/>
    </location>
</feature>
<feature type="transmembrane region" description="Helical; Name=VII" evidence="1">
    <location>
        <begin position="233"/>
        <end position="256"/>
    </location>
</feature>
<feature type="topological domain" description="Mitochondrial intermembrane" evidence="1">
    <location>
        <begin position="257"/>
        <end position="261"/>
    </location>
</feature>
<protein>
    <recommendedName>
        <fullName>Cytochrome c oxidase subunit 3</fullName>
        <ecNumber>7.1.1.9</ecNumber>
    </recommendedName>
    <alternativeName>
        <fullName>Cytochrome c oxidase polypeptide III</fullName>
    </alternativeName>
</protein>
<dbReference type="EC" id="7.1.1.9"/>
<dbReference type="EMBL" id="AJ010957">
    <property type="protein sequence ID" value="CAA09434.1"/>
    <property type="molecule type" value="Genomic_DNA"/>
</dbReference>
<dbReference type="RefSeq" id="NP_008796.1">
    <property type="nucleotide sequence ID" value="NC_000889.1"/>
</dbReference>
<dbReference type="SMR" id="Q9ZZY5"/>
<dbReference type="GeneID" id="808674"/>
<dbReference type="CTD" id="4514"/>
<dbReference type="GO" id="GO:0005743">
    <property type="term" value="C:mitochondrial inner membrane"/>
    <property type="evidence" value="ECO:0007669"/>
    <property type="project" value="UniProtKB-SubCell"/>
</dbReference>
<dbReference type="GO" id="GO:0045277">
    <property type="term" value="C:respiratory chain complex IV"/>
    <property type="evidence" value="ECO:0000250"/>
    <property type="project" value="UniProtKB"/>
</dbReference>
<dbReference type="GO" id="GO:0004129">
    <property type="term" value="F:cytochrome-c oxidase activity"/>
    <property type="evidence" value="ECO:0007669"/>
    <property type="project" value="UniProtKB-EC"/>
</dbReference>
<dbReference type="GO" id="GO:0006123">
    <property type="term" value="P:mitochondrial electron transport, cytochrome c to oxygen"/>
    <property type="evidence" value="ECO:0007669"/>
    <property type="project" value="TreeGrafter"/>
</dbReference>
<dbReference type="GO" id="GO:0008535">
    <property type="term" value="P:respiratory chain complex IV assembly"/>
    <property type="evidence" value="ECO:0000250"/>
    <property type="project" value="UniProtKB"/>
</dbReference>
<dbReference type="CDD" id="cd01665">
    <property type="entry name" value="Cyt_c_Oxidase_III"/>
    <property type="match status" value="1"/>
</dbReference>
<dbReference type="FunFam" id="1.10.287.70:FF:000048">
    <property type="entry name" value="Cytochrome c oxidase subunit 3"/>
    <property type="match status" value="1"/>
</dbReference>
<dbReference type="FunFam" id="1.20.120.80:FF:000002">
    <property type="entry name" value="Cytochrome c oxidase subunit 3"/>
    <property type="match status" value="1"/>
</dbReference>
<dbReference type="Gene3D" id="1.10.287.70">
    <property type="match status" value="1"/>
</dbReference>
<dbReference type="Gene3D" id="1.20.120.80">
    <property type="entry name" value="Cytochrome c oxidase, subunit III, four-helix bundle"/>
    <property type="match status" value="1"/>
</dbReference>
<dbReference type="InterPro" id="IPR024791">
    <property type="entry name" value="Cyt_c/ubiquinol_Oxase_su3"/>
</dbReference>
<dbReference type="InterPro" id="IPR033945">
    <property type="entry name" value="Cyt_c_oxase_su3_dom"/>
</dbReference>
<dbReference type="InterPro" id="IPR000298">
    <property type="entry name" value="Cyt_c_oxidase-like_su3"/>
</dbReference>
<dbReference type="InterPro" id="IPR035973">
    <property type="entry name" value="Cyt_c_oxidase_su3-like_sf"/>
</dbReference>
<dbReference type="InterPro" id="IPR013833">
    <property type="entry name" value="Cyt_c_oxidase_su3_a-hlx"/>
</dbReference>
<dbReference type="PANTHER" id="PTHR11403:SF7">
    <property type="entry name" value="CYTOCHROME C OXIDASE SUBUNIT 3"/>
    <property type="match status" value="1"/>
</dbReference>
<dbReference type="PANTHER" id="PTHR11403">
    <property type="entry name" value="CYTOCHROME C OXIDASE SUBUNIT III"/>
    <property type="match status" value="1"/>
</dbReference>
<dbReference type="Pfam" id="PF00510">
    <property type="entry name" value="COX3"/>
    <property type="match status" value="1"/>
</dbReference>
<dbReference type="SUPFAM" id="SSF81452">
    <property type="entry name" value="Cytochrome c oxidase subunit III-like"/>
    <property type="match status" value="1"/>
</dbReference>
<dbReference type="PROSITE" id="PS50253">
    <property type="entry name" value="COX3"/>
    <property type="match status" value="1"/>
</dbReference>